<sequence length="281" mass="30541">MNNLPVVRSPWRIVILLLGFTFLYAPMLMLVIYSFNSSKLVTVWAGWSTRWYGELLRDDAMMSAVGLSLTIAACAATAAAILGTIAAVVLVRFGRFRGSNGFAFMITAPLVMPDVITGLSLLLLFVALAHAIGWPADRGMLTIWLAHVTFCTAYVAVVISSRLRELDRSIEEAAMDLGATPLKVFFVITLPMIMPAIISGWLLAFTLSLDDLVIASFVSGPGATTLPMLVFSSVRMGVNPEINALATLILGAVGIVGFIAWYLMARAEKQRIRDIQRARRG</sequence>
<name>POTI_ECOLI</name>
<reference key="1">
    <citation type="journal article" date="1993" name="J. Biol. Chem.">
        <title>Characteristics of the operon for a putrescine transport system that maps at 19 minutes on the Escherichia coli chromosome.</title>
        <authorList>
            <person name="Pistocchi R."/>
            <person name="Kashiwagi K."/>
            <person name="Miyamoto S."/>
            <person name="Nukui E."/>
            <person name="Sadakata Y."/>
            <person name="Kobayashi H."/>
            <person name="Igarashi K."/>
        </authorList>
    </citation>
    <scope>NUCLEOTIDE SEQUENCE [GENOMIC DNA]</scope>
    <scope>FUNCTION</scope>
    <scope>SUBUNIT</scope>
</reference>
<reference key="2">
    <citation type="journal article" date="1996" name="DNA Res.">
        <title>A 718-kb DNA sequence of the Escherichia coli K-12 genome corresponding to the 12.7-28.0 min region on the linkage map.</title>
        <authorList>
            <person name="Oshima T."/>
            <person name="Aiba H."/>
            <person name="Baba T."/>
            <person name="Fujita K."/>
            <person name="Hayashi K."/>
            <person name="Honjo A."/>
            <person name="Ikemoto K."/>
            <person name="Inada T."/>
            <person name="Itoh T."/>
            <person name="Kajihara M."/>
            <person name="Kanai K."/>
            <person name="Kashimoto K."/>
            <person name="Kimura S."/>
            <person name="Kitagawa M."/>
            <person name="Makino K."/>
            <person name="Masuda S."/>
            <person name="Miki T."/>
            <person name="Mizobuchi K."/>
            <person name="Mori H."/>
            <person name="Motomura K."/>
            <person name="Nakamura Y."/>
            <person name="Nashimoto H."/>
            <person name="Nishio Y."/>
            <person name="Saito N."/>
            <person name="Sampei G."/>
            <person name="Seki Y."/>
            <person name="Tagami H."/>
            <person name="Takemoto K."/>
            <person name="Wada C."/>
            <person name="Yamamoto Y."/>
            <person name="Yano M."/>
            <person name="Horiuchi T."/>
        </authorList>
    </citation>
    <scope>NUCLEOTIDE SEQUENCE [LARGE SCALE GENOMIC DNA]</scope>
    <source>
        <strain>K12 / W3110 / ATCC 27325 / DSM 5911</strain>
    </source>
</reference>
<reference key="3">
    <citation type="journal article" date="1997" name="Science">
        <title>The complete genome sequence of Escherichia coli K-12.</title>
        <authorList>
            <person name="Blattner F.R."/>
            <person name="Plunkett G. III"/>
            <person name="Bloch C.A."/>
            <person name="Perna N.T."/>
            <person name="Burland V."/>
            <person name="Riley M."/>
            <person name="Collado-Vides J."/>
            <person name="Glasner J.D."/>
            <person name="Rode C.K."/>
            <person name="Mayhew G.F."/>
            <person name="Gregor J."/>
            <person name="Davis N.W."/>
            <person name="Kirkpatrick H.A."/>
            <person name="Goeden M.A."/>
            <person name="Rose D.J."/>
            <person name="Mau B."/>
            <person name="Shao Y."/>
        </authorList>
    </citation>
    <scope>NUCLEOTIDE SEQUENCE [LARGE SCALE GENOMIC DNA]</scope>
    <source>
        <strain>K12 / MG1655 / ATCC 47076</strain>
    </source>
</reference>
<reference key="4">
    <citation type="journal article" date="2006" name="Mol. Syst. Biol.">
        <title>Highly accurate genome sequences of Escherichia coli K-12 strains MG1655 and W3110.</title>
        <authorList>
            <person name="Hayashi K."/>
            <person name="Morooka N."/>
            <person name="Yamamoto Y."/>
            <person name="Fujita K."/>
            <person name="Isono K."/>
            <person name="Choi S."/>
            <person name="Ohtsubo E."/>
            <person name="Baba T."/>
            <person name="Wanner B.L."/>
            <person name="Mori H."/>
            <person name="Horiuchi T."/>
        </authorList>
    </citation>
    <scope>NUCLEOTIDE SEQUENCE [LARGE SCALE GENOMIC DNA]</scope>
    <source>
        <strain>K12 / W3110 / ATCC 27325 / DSM 5911</strain>
    </source>
</reference>
<reference key="5">
    <citation type="journal article" date="2005" name="Science">
        <title>Global topology analysis of the Escherichia coli inner membrane proteome.</title>
        <authorList>
            <person name="Daley D.O."/>
            <person name="Rapp M."/>
            <person name="Granseth E."/>
            <person name="Melen K."/>
            <person name="Drew D."/>
            <person name="von Heijne G."/>
        </authorList>
    </citation>
    <scope>SUBCELLULAR LOCATION</scope>
    <source>
        <strain>K12 / MG1655 / ATCC 47076</strain>
    </source>
</reference>
<reference key="6">
    <citation type="journal article" date="2014" name="Amino Acids">
        <title>Properties of putrescine uptake by PotFGHI and PuuP and their physiological significance in Escherichia coli.</title>
        <authorList>
            <person name="Terui Y."/>
            <person name="Saroj S.D."/>
            <person name="Sakamoto A."/>
            <person name="Yoshida T."/>
            <person name="Higashi K."/>
            <person name="Kurihara S."/>
            <person name="Suzuki H."/>
            <person name="Toida T."/>
            <person name="Kashiwagi K."/>
            <person name="Igarashi K."/>
        </authorList>
    </citation>
    <scope>FUNCTION</scope>
    <scope>ACTIVITY REGULATION</scope>
    <scope>SUBUNIT</scope>
</reference>
<keyword id="KW-0997">Cell inner membrane</keyword>
<keyword id="KW-1003">Cell membrane</keyword>
<keyword id="KW-0472">Membrane</keyword>
<keyword id="KW-1185">Reference proteome</keyword>
<keyword id="KW-0812">Transmembrane</keyword>
<keyword id="KW-1133">Transmembrane helix</keyword>
<keyword id="KW-0813">Transport</keyword>
<organism>
    <name type="scientific">Escherichia coli (strain K12)</name>
    <dbReference type="NCBI Taxonomy" id="83333"/>
    <lineage>
        <taxon>Bacteria</taxon>
        <taxon>Pseudomonadati</taxon>
        <taxon>Pseudomonadota</taxon>
        <taxon>Gammaproteobacteria</taxon>
        <taxon>Enterobacterales</taxon>
        <taxon>Enterobacteriaceae</taxon>
        <taxon>Escherichia</taxon>
    </lineage>
</organism>
<feature type="chain" id="PRO_0000060189" description="Putrescine transport system permease protein PotI">
    <location>
        <begin position="1"/>
        <end position="281"/>
    </location>
</feature>
<feature type="topological domain" description="Cytoplasmic" evidence="1">
    <location>
        <begin position="1"/>
        <end position="13"/>
    </location>
</feature>
<feature type="transmembrane region" description="Helical" evidence="2">
    <location>
        <begin position="14"/>
        <end position="33"/>
    </location>
</feature>
<feature type="topological domain" description="Periplasmic" evidence="1">
    <location>
        <begin position="34"/>
        <end position="68"/>
    </location>
</feature>
<feature type="transmembrane region" description="Helical" evidence="2">
    <location>
        <begin position="69"/>
        <end position="88"/>
    </location>
</feature>
<feature type="topological domain" description="Cytoplasmic" evidence="1">
    <location>
        <begin position="89"/>
        <end position="115"/>
    </location>
</feature>
<feature type="transmembrane region" description="Helical" evidence="2">
    <location>
        <begin position="116"/>
        <end position="135"/>
    </location>
</feature>
<feature type="topological domain" description="Periplasmic" evidence="1">
    <location>
        <begin position="136"/>
        <end position="140"/>
    </location>
</feature>
<feature type="transmembrane region" description="Helical" evidence="2">
    <location>
        <begin position="141"/>
        <end position="160"/>
    </location>
</feature>
<feature type="topological domain" description="Cytoplasmic" evidence="1">
    <location>
        <begin position="161"/>
        <end position="186"/>
    </location>
</feature>
<feature type="transmembrane region" description="Helical" evidence="2">
    <location>
        <begin position="187"/>
        <end position="206"/>
    </location>
</feature>
<feature type="topological domain" description="Periplasmic" evidence="1">
    <location>
        <begin position="207"/>
        <end position="243"/>
    </location>
</feature>
<feature type="transmembrane region" description="Helical" evidence="2">
    <location>
        <begin position="244"/>
        <end position="263"/>
    </location>
</feature>
<feature type="topological domain" description="Cytoplasmic" evidence="1">
    <location>
        <begin position="264"/>
        <end position="281"/>
    </location>
</feature>
<feature type="domain" description="ABC transmembrane type-1" evidence="2">
    <location>
        <begin position="65"/>
        <end position="260"/>
    </location>
</feature>
<dbReference type="EMBL" id="M93239">
    <property type="protein sequence ID" value="AAA24412.1"/>
    <property type="molecule type" value="Genomic_DNA"/>
</dbReference>
<dbReference type="EMBL" id="U00096">
    <property type="protein sequence ID" value="AAC73944.1"/>
    <property type="molecule type" value="Genomic_DNA"/>
</dbReference>
<dbReference type="EMBL" id="AP009048">
    <property type="protein sequence ID" value="BAA35568.1"/>
    <property type="molecule type" value="Genomic_DNA"/>
</dbReference>
<dbReference type="PIR" id="D45313">
    <property type="entry name" value="D45313"/>
</dbReference>
<dbReference type="RefSeq" id="NP_415378.1">
    <property type="nucleotide sequence ID" value="NC_000913.3"/>
</dbReference>
<dbReference type="RefSeq" id="WP_001061658.1">
    <property type="nucleotide sequence ID" value="NZ_SSZK01000002.1"/>
</dbReference>
<dbReference type="SMR" id="P0AFL1"/>
<dbReference type="BioGRID" id="4259996">
    <property type="interactions" value="3"/>
</dbReference>
<dbReference type="ComplexPortal" id="CPX-4384">
    <property type="entry name" value="Putrescine ABC transporter complex"/>
</dbReference>
<dbReference type="FunCoup" id="P0AFL1">
    <property type="interactions" value="231"/>
</dbReference>
<dbReference type="STRING" id="511145.b0857"/>
<dbReference type="TCDB" id="3.A.1.11.2">
    <property type="family name" value="the atp-binding cassette (abc) superfamily"/>
</dbReference>
<dbReference type="PaxDb" id="511145-b0857"/>
<dbReference type="EnsemblBacteria" id="AAC73944">
    <property type="protein sequence ID" value="AAC73944"/>
    <property type="gene ID" value="b0857"/>
</dbReference>
<dbReference type="GeneID" id="89520233"/>
<dbReference type="GeneID" id="945485"/>
<dbReference type="KEGG" id="ecj:JW0841"/>
<dbReference type="KEGG" id="eco:b0857"/>
<dbReference type="KEGG" id="ecoc:C3026_05345"/>
<dbReference type="PATRIC" id="fig|1411691.4.peg.1420"/>
<dbReference type="EchoBASE" id="EB1589"/>
<dbReference type="eggNOG" id="COG1177">
    <property type="taxonomic scope" value="Bacteria"/>
</dbReference>
<dbReference type="HOGENOM" id="CLU_016047_3_0_6"/>
<dbReference type="InParanoid" id="P0AFL1"/>
<dbReference type="OMA" id="FPMFVWG"/>
<dbReference type="OrthoDB" id="9782004at2"/>
<dbReference type="PhylomeDB" id="P0AFL1"/>
<dbReference type="BioCyc" id="EcoCyc:POTI-MONOMER"/>
<dbReference type="BioCyc" id="MetaCyc:POTI-MONOMER"/>
<dbReference type="PRO" id="PR:P0AFL1"/>
<dbReference type="Proteomes" id="UP000000625">
    <property type="component" value="Chromosome"/>
</dbReference>
<dbReference type="GO" id="GO:0043190">
    <property type="term" value="C:ATP-binding cassette (ABC) transporter complex"/>
    <property type="evidence" value="ECO:0000304"/>
    <property type="project" value="EcoCyc"/>
</dbReference>
<dbReference type="GO" id="GO:0055052">
    <property type="term" value="C:ATP-binding cassette (ABC) transporter complex, substrate-binding subunit-containing"/>
    <property type="evidence" value="ECO:0000303"/>
    <property type="project" value="ComplexPortal"/>
</dbReference>
<dbReference type="GO" id="GO:0016020">
    <property type="term" value="C:membrane"/>
    <property type="evidence" value="ECO:0000303"/>
    <property type="project" value="ComplexPortal"/>
</dbReference>
<dbReference type="GO" id="GO:0005886">
    <property type="term" value="C:plasma membrane"/>
    <property type="evidence" value="ECO:0000314"/>
    <property type="project" value="EcoCyc"/>
</dbReference>
<dbReference type="GO" id="GO:0015847">
    <property type="term" value="P:putrescine transport"/>
    <property type="evidence" value="ECO:0000315"/>
    <property type="project" value="EcoCyc"/>
</dbReference>
<dbReference type="GO" id="GO:0055085">
    <property type="term" value="P:transmembrane transport"/>
    <property type="evidence" value="ECO:0007669"/>
    <property type="project" value="InterPro"/>
</dbReference>
<dbReference type="CDD" id="cd06261">
    <property type="entry name" value="TM_PBP2"/>
    <property type="match status" value="1"/>
</dbReference>
<dbReference type="FunFam" id="1.10.3720.10:FF:000040">
    <property type="entry name" value="Putrescine ABC transporter, permease protein PotI"/>
    <property type="match status" value="1"/>
</dbReference>
<dbReference type="Gene3D" id="1.10.3720.10">
    <property type="entry name" value="MetI-like"/>
    <property type="match status" value="1"/>
</dbReference>
<dbReference type="InterPro" id="IPR051789">
    <property type="entry name" value="Bact_Polyamine_Transport"/>
</dbReference>
<dbReference type="InterPro" id="IPR000515">
    <property type="entry name" value="MetI-like"/>
</dbReference>
<dbReference type="InterPro" id="IPR035906">
    <property type="entry name" value="MetI-like_sf"/>
</dbReference>
<dbReference type="NCBIfam" id="NF007889">
    <property type="entry name" value="PRK10592.1"/>
    <property type="match status" value="1"/>
</dbReference>
<dbReference type="PANTHER" id="PTHR43848">
    <property type="entry name" value="PUTRESCINE TRANSPORT SYSTEM PERMEASE PROTEIN POTI"/>
    <property type="match status" value="1"/>
</dbReference>
<dbReference type="PANTHER" id="PTHR43848:SF2">
    <property type="entry name" value="PUTRESCINE TRANSPORT SYSTEM PERMEASE PROTEIN POTI"/>
    <property type="match status" value="1"/>
</dbReference>
<dbReference type="Pfam" id="PF00528">
    <property type="entry name" value="BPD_transp_1"/>
    <property type="match status" value="1"/>
</dbReference>
<dbReference type="SUPFAM" id="SSF161098">
    <property type="entry name" value="MetI-like"/>
    <property type="match status" value="1"/>
</dbReference>
<dbReference type="PROSITE" id="PS50928">
    <property type="entry name" value="ABC_TM1"/>
    <property type="match status" value="1"/>
</dbReference>
<gene>
    <name evidence="6" type="primary">potI</name>
    <name type="ordered locus">b0857</name>
    <name type="ordered locus">JW0841</name>
</gene>
<accession>P0AFL1</accession>
<accession>P31136</accession>
<comment type="function">
    <text evidence="4 5 7">Part of the ABC transporter complex PotFGHI involved in putrescine uptake (PubMed:23719730, PubMed:8416922). Responsible for the translocation of the substrate across the membrane (Probable). Imports putrescine for maintenance of the optimal concentration of polyamines necessary for cell growth in the presence of glucose (PubMed:23719730).</text>
</comment>
<comment type="activity regulation">
    <text evidence="4">Transport is feedback inhibited by intracellular polyamines.</text>
</comment>
<comment type="subunit">
    <text evidence="4 5">The complex is composed of two ATP-binding proteins (PotG), two transmembrane proteins (PotH and PotI) and a solute-binding protein (PotF).</text>
</comment>
<comment type="subcellular location">
    <subcellularLocation>
        <location evidence="3">Cell inner membrane</location>
        <topology evidence="1">Multi-pass membrane protein</topology>
    </subcellularLocation>
</comment>
<comment type="similarity">
    <text evidence="7">Belongs to the binding-protein-dependent transport system permease family. CysTW subfamily.</text>
</comment>
<evidence type="ECO:0000255" key="1"/>
<evidence type="ECO:0000255" key="2">
    <source>
        <dbReference type="PROSITE-ProRule" id="PRU00441"/>
    </source>
</evidence>
<evidence type="ECO:0000269" key="3">
    <source>
    </source>
</evidence>
<evidence type="ECO:0000269" key="4">
    <source>
    </source>
</evidence>
<evidence type="ECO:0000269" key="5">
    <source>
    </source>
</evidence>
<evidence type="ECO:0000303" key="6">
    <source>
    </source>
</evidence>
<evidence type="ECO:0000305" key="7"/>
<protein>
    <recommendedName>
        <fullName evidence="7">Putrescine transport system permease protein PotI</fullName>
    </recommendedName>
</protein>
<proteinExistence type="evidence at protein level"/>